<dbReference type="EMBL" id="AB011994">
    <property type="protein sequence ID" value="BAA32769.1"/>
    <property type="molecule type" value="Genomic_DNA"/>
</dbReference>
<dbReference type="EMBL" id="AB039314">
    <property type="protein sequence ID" value="BAB33121.1"/>
    <property type="molecule type" value="Genomic_DNA"/>
</dbReference>
<dbReference type="RefSeq" id="YP_010288586.1">
    <property type="nucleotide sequence ID" value="NC_061264.1"/>
</dbReference>
<dbReference type="GeneID" id="71039587"/>
<dbReference type="GO" id="GO:0009507">
    <property type="term" value="C:chloroplast"/>
    <property type="evidence" value="ECO:0007669"/>
    <property type="project" value="UniProtKB-SubCell"/>
</dbReference>
<dbReference type="GO" id="GO:0003723">
    <property type="term" value="F:RNA binding"/>
    <property type="evidence" value="ECO:0007669"/>
    <property type="project" value="UniProtKB-KW"/>
</dbReference>
<dbReference type="GO" id="GO:0006397">
    <property type="term" value="P:mRNA processing"/>
    <property type="evidence" value="ECO:0007669"/>
    <property type="project" value="UniProtKB-KW"/>
</dbReference>
<dbReference type="GO" id="GO:0008380">
    <property type="term" value="P:RNA splicing"/>
    <property type="evidence" value="ECO:0007669"/>
    <property type="project" value="UniProtKB-UniRule"/>
</dbReference>
<dbReference type="GO" id="GO:0008033">
    <property type="term" value="P:tRNA processing"/>
    <property type="evidence" value="ECO:0007669"/>
    <property type="project" value="UniProtKB-KW"/>
</dbReference>
<dbReference type="HAMAP" id="MF_01390">
    <property type="entry name" value="MatK"/>
    <property type="match status" value="1"/>
</dbReference>
<dbReference type="InterPro" id="IPR024937">
    <property type="entry name" value="Domain_X"/>
</dbReference>
<dbReference type="InterPro" id="IPR002866">
    <property type="entry name" value="Maturase_MatK"/>
</dbReference>
<dbReference type="InterPro" id="IPR024942">
    <property type="entry name" value="Maturase_MatK_N"/>
</dbReference>
<dbReference type="PANTHER" id="PTHR34811">
    <property type="entry name" value="MATURASE K"/>
    <property type="match status" value="1"/>
</dbReference>
<dbReference type="PANTHER" id="PTHR34811:SF1">
    <property type="entry name" value="MATURASE K"/>
    <property type="match status" value="1"/>
</dbReference>
<dbReference type="Pfam" id="PF01348">
    <property type="entry name" value="Intron_maturas2"/>
    <property type="match status" value="1"/>
</dbReference>
<dbReference type="Pfam" id="PF01824">
    <property type="entry name" value="MatK_N"/>
    <property type="match status" value="1"/>
</dbReference>
<reference key="1">
    <citation type="journal article" date="1998" name="Sci. Hortic.">
        <title>Phylogenetic analyses of the genus Rosa using the matK sequence: molecular evidence for the narrow genetic background of modern roses.</title>
        <authorList>
            <person name="Matsumoto S."/>
            <person name="Kouchi M."/>
            <person name="Yabuki J."/>
            <person name="Kusunoki M."/>
            <person name="Ueda Y."/>
            <person name="Fukui H."/>
        </authorList>
    </citation>
    <scope>NUCLEOTIDE SEQUENCE [GENOMIC DNA]</scope>
    <source>
        <tissue>Leaf</tissue>
    </source>
</reference>
<reference key="2">
    <citation type="submission" date="2000-02" db="EMBL/GenBank/DDBJ databases">
        <title>Phylogenetic analysis of Japanese Rosa using matK sequences.</title>
        <authorList>
            <person name="Wu S."/>
            <person name="Ueda Y."/>
            <person name="Matsumoto S."/>
            <person name="Nishihara S."/>
        </authorList>
    </citation>
    <scope>NUCLEOTIDE SEQUENCE [GENOMIC DNA]</scope>
    <source>
        <tissue>Leaf</tissue>
    </source>
</reference>
<gene>
    <name evidence="1" type="primary">matK</name>
</gene>
<feature type="chain" id="PRO_0000143689" description="Maturase K">
    <location>
        <begin position="1"/>
        <end position="503"/>
    </location>
</feature>
<geneLocation type="chloroplast"/>
<protein>
    <recommendedName>
        <fullName evidence="1">Maturase K</fullName>
    </recommendedName>
    <alternativeName>
        <fullName evidence="1">Intron maturase</fullName>
    </alternativeName>
</protein>
<sequence length="503" mass="59660">MEEFQGYLELYRSQQHDFLYPLIFREYIYALAHDRGLNRSVLLDNVGYDKKSSLLIIKRLISRMYQQNHFIISLNDSNQNKFLGYNKNLYSQMISEGFAVIVEIPFSLRLVSSLEETETVKSYNLRSIHSIFPFFEDKFPHLNYASDVLIPYPIHLEILVQTLRYCVKDPSSLHLLRLFLHEYYNWNTLITPKKSIFAKSNQRLFLLLYNSYVCEYESILLFLRNQSNHLRLTSSGILFERIRFYEKIKYPVEEVFANDFPATLWFFKDPFIQYVRYQGKSILASKDTPLLMNKWKYYLVHFWQCHFYVWSQPGRIHINQLSKHSFDFLGYLSSIRPNISVVRSQLLENSFLMDNAMKKLDTLFPIIPMIGSLAKVKFCNTSGHPISKSSWADSSDSDIIDRFVRIGGNLSHYYSGSSKKKSLYRIKYILRLSCVKTLARKHKSTVRTFLKRLGPKLLDEFFTEEEQIFSLLFPRTSSTLKRFYRGRIWYLDILCINDLVNHE</sequence>
<proteinExistence type="inferred from homology"/>
<accession>O78254</accession>
<name>MATK_ROSGI</name>
<keyword id="KW-0150">Chloroplast</keyword>
<keyword id="KW-0507">mRNA processing</keyword>
<keyword id="KW-0934">Plastid</keyword>
<keyword id="KW-0694">RNA-binding</keyword>
<keyword id="KW-0819">tRNA processing</keyword>
<comment type="function">
    <text evidence="1">Usually encoded in the trnK tRNA gene intron. Probably assists in splicing its own and other chloroplast group II introns.</text>
</comment>
<comment type="subcellular location">
    <subcellularLocation>
        <location>Plastid</location>
        <location>Chloroplast</location>
    </subcellularLocation>
</comment>
<comment type="similarity">
    <text evidence="1">Belongs to the intron maturase 2 family. MatK subfamily.</text>
</comment>
<evidence type="ECO:0000255" key="1">
    <source>
        <dbReference type="HAMAP-Rule" id="MF_01390"/>
    </source>
</evidence>
<organism>
    <name type="scientific">Rosa gigantea</name>
    <name type="common">Giant tea rose</name>
    <name type="synonym">Rosa odorata var. gigantea</name>
    <dbReference type="NCBI Taxonomy" id="74650"/>
    <lineage>
        <taxon>Eukaryota</taxon>
        <taxon>Viridiplantae</taxon>
        <taxon>Streptophyta</taxon>
        <taxon>Embryophyta</taxon>
        <taxon>Tracheophyta</taxon>
        <taxon>Spermatophyta</taxon>
        <taxon>Magnoliopsida</taxon>
        <taxon>eudicotyledons</taxon>
        <taxon>Gunneridae</taxon>
        <taxon>Pentapetalae</taxon>
        <taxon>rosids</taxon>
        <taxon>fabids</taxon>
        <taxon>Rosales</taxon>
        <taxon>Rosaceae</taxon>
        <taxon>Rosoideae</taxon>
        <taxon>Rosoideae incertae sedis</taxon>
        <taxon>Rosa</taxon>
    </lineage>
</organism>